<name>Y7832_ORYSJ</name>
<gene>
    <name type="ordered locus">Os07g0183200</name>
    <name type="ordered locus">LOC_Os07g08530</name>
    <name type="ORF">OJ1046_F10.104</name>
    <name type="ORF">OJ1506_G02.21</name>
</gene>
<reference key="1">
    <citation type="journal article" date="2005" name="Nature">
        <title>The map-based sequence of the rice genome.</title>
        <authorList>
            <consortium name="International rice genome sequencing project (IRGSP)"/>
        </authorList>
    </citation>
    <scope>NUCLEOTIDE SEQUENCE [LARGE SCALE GENOMIC DNA]</scope>
    <source>
        <strain>cv. Nipponbare</strain>
    </source>
</reference>
<reference key="2">
    <citation type="journal article" date="2008" name="Nucleic Acids Res.">
        <title>The rice annotation project database (RAP-DB): 2008 update.</title>
        <authorList>
            <consortium name="The rice annotation project (RAP)"/>
        </authorList>
    </citation>
    <scope>GENOME REANNOTATION</scope>
    <source>
        <strain>cv. Nipponbare</strain>
    </source>
</reference>
<reference key="3">
    <citation type="journal article" date="2013" name="Rice">
        <title>Improvement of the Oryza sativa Nipponbare reference genome using next generation sequence and optical map data.</title>
        <authorList>
            <person name="Kawahara Y."/>
            <person name="de la Bastide M."/>
            <person name="Hamilton J.P."/>
            <person name="Kanamori H."/>
            <person name="McCombie W.R."/>
            <person name="Ouyang S."/>
            <person name="Schwartz D.C."/>
            <person name="Tanaka T."/>
            <person name="Wu J."/>
            <person name="Zhou S."/>
            <person name="Childs K.L."/>
            <person name="Davidson R.M."/>
            <person name="Lin H."/>
            <person name="Quesada-Ocampo L."/>
            <person name="Vaillancourt B."/>
            <person name="Sakai H."/>
            <person name="Lee S.S."/>
            <person name="Kim J."/>
            <person name="Numa H."/>
            <person name="Itoh T."/>
            <person name="Buell C.R."/>
            <person name="Matsumoto T."/>
        </authorList>
    </citation>
    <scope>GENOME REANNOTATION</scope>
    <source>
        <strain>cv. Nipponbare</strain>
    </source>
</reference>
<reference key="4">
    <citation type="journal article" date="2003" name="Science">
        <title>Collection, mapping, and annotation of over 28,000 cDNA clones from japonica rice.</title>
        <authorList>
            <consortium name="The rice full-length cDNA consortium"/>
        </authorList>
    </citation>
    <scope>NUCLEOTIDE SEQUENCE [LARGE SCALE MRNA]</scope>
    <source>
        <strain>cv. Nipponbare</strain>
    </source>
</reference>
<accession>Q8H507</accession>
<accession>A0A0P0X390</accession>
<feature type="chain" id="PRO_0000376977" description="B3 domain-containing protein Os07g0183200">
    <location>
        <begin position="1"/>
        <end position="407"/>
    </location>
</feature>
<feature type="DNA-binding region" description="TF-B3" evidence="1">
    <location>
        <begin position="124"/>
        <end position="227"/>
    </location>
</feature>
<feature type="sequence conflict" description="In Ref. 4; AK064661." evidence="2" ref="4">
    <original>D</original>
    <variation>G</variation>
    <location>
        <position position="19"/>
    </location>
</feature>
<feature type="sequence conflict" description="In Ref. 4; AK064661." evidence="2" ref="4">
    <original>I</original>
    <variation>V</variation>
    <location>
        <position position="314"/>
    </location>
</feature>
<protein>
    <recommendedName>
        <fullName>B3 domain-containing protein Os07g0183200</fullName>
    </recommendedName>
</protein>
<proteinExistence type="evidence at transcript level"/>
<sequence length="407" mass="44622">MAAAAAPLADDGDGIVDRDMWLACAAPNSGRLPAVGSVVFYFVDGHAAQFCQFPAPLLEQLAVPGPRVFLCTVAAVRLRADALTNEAYAEITLDPVADHDVPRLAPAPAPAPAAAAGGQQLRYFVKTLMISDFDFRIRFSAPMADAKGVFPPLVDAKAVQPLLVKDLHGSPMTFDYGRKGKRVTLAKVWKKFRDDMDFVDGDSVIFMRRRDDDDDDGELYVGVRRQRTLERPLRNTMRRYRPPTPPQAAVQEAVLAAAGHAAAGERFTVAYRSRKDGDEFVVPREAVEEGLRARLTSLAEVEFVWAVEDGAPPIVGPRGKVTAIATGQLWRNLEIVWDGNSEMDMSANFWQVRPVEEVDISPSTPPPKRLKNCEIDDTASTSVSVDNGDEQVPTMRQRLEALIPDNI</sequence>
<keyword id="KW-0238">DNA-binding</keyword>
<keyword id="KW-0539">Nucleus</keyword>
<keyword id="KW-1185">Reference proteome</keyword>
<keyword id="KW-0804">Transcription</keyword>
<keyword id="KW-0805">Transcription regulation</keyword>
<dbReference type="EMBL" id="AP003835">
    <property type="protein sequence ID" value="BAD30343.1"/>
    <property type="molecule type" value="Genomic_DNA"/>
</dbReference>
<dbReference type="EMBL" id="AP003861">
    <property type="protein sequence ID" value="BAC24870.1"/>
    <property type="molecule type" value="Genomic_DNA"/>
</dbReference>
<dbReference type="EMBL" id="AP008213">
    <property type="protein sequence ID" value="BAF20967.1"/>
    <property type="molecule type" value="Genomic_DNA"/>
</dbReference>
<dbReference type="EMBL" id="AP014963">
    <property type="protein sequence ID" value="BAT00341.1"/>
    <property type="molecule type" value="Genomic_DNA"/>
</dbReference>
<dbReference type="EMBL" id="AK064661">
    <property type="status" value="NOT_ANNOTATED_CDS"/>
    <property type="molecule type" value="mRNA"/>
</dbReference>
<dbReference type="RefSeq" id="XP_015646443.1">
    <property type="nucleotide sequence ID" value="XM_015790957.1"/>
</dbReference>
<dbReference type="SMR" id="Q8H507"/>
<dbReference type="PaxDb" id="39947-Q8H507"/>
<dbReference type="EnsemblPlants" id="Os07t0183200-01">
    <property type="protein sequence ID" value="Os07t0183200-01"/>
    <property type="gene ID" value="Os07g0183200"/>
</dbReference>
<dbReference type="Gramene" id="Os07t0183200-01">
    <property type="protein sequence ID" value="Os07t0183200-01"/>
    <property type="gene ID" value="Os07g0183200"/>
</dbReference>
<dbReference type="KEGG" id="dosa:Os07g0183200"/>
<dbReference type="eggNOG" id="ENOG502QVP0">
    <property type="taxonomic scope" value="Eukaryota"/>
</dbReference>
<dbReference type="HOGENOM" id="CLU_020046_1_0_1"/>
<dbReference type="InParanoid" id="Q8H507"/>
<dbReference type="OMA" id="TENWIQM"/>
<dbReference type="OrthoDB" id="623997at2759"/>
<dbReference type="Proteomes" id="UP000000763">
    <property type="component" value="Chromosome 7"/>
</dbReference>
<dbReference type="Proteomes" id="UP000059680">
    <property type="component" value="Chromosome 7"/>
</dbReference>
<dbReference type="GO" id="GO:0005634">
    <property type="term" value="C:nucleus"/>
    <property type="evidence" value="ECO:0007669"/>
    <property type="project" value="UniProtKB-SubCell"/>
</dbReference>
<dbReference type="GO" id="GO:0003677">
    <property type="term" value="F:DNA binding"/>
    <property type="evidence" value="ECO:0007669"/>
    <property type="project" value="UniProtKB-KW"/>
</dbReference>
<dbReference type="GO" id="GO:0006355">
    <property type="term" value="P:regulation of DNA-templated transcription"/>
    <property type="evidence" value="ECO:0007669"/>
    <property type="project" value="InterPro"/>
</dbReference>
<dbReference type="GO" id="GO:0009725">
    <property type="term" value="P:response to hormone"/>
    <property type="evidence" value="ECO:0007669"/>
    <property type="project" value="InterPro"/>
</dbReference>
<dbReference type="CDD" id="cd10017">
    <property type="entry name" value="B3_DNA"/>
    <property type="match status" value="1"/>
</dbReference>
<dbReference type="Gene3D" id="2.40.330.10">
    <property type="entry name" value="DNA-binding pseudobarrel domain"/>
    <property type="match status" value="1"/>
</dbReference>
<dbReference type="InterPro" id="IPR044835">
    <property type="entry name" value="ARF_plant"/>
</dbReference>
<dbReference type="InterPro" id="IPR003340">
    <property type="entry name" value="B3_DNA-bd"/>
</dbReference>
<dbReference type="InterPro" id="IPR015300">
    <property type="entry name" value="DNA-bd_pseudobarrel_sf"/>
</dbReference>
<dbReference type="PANTHER" id="PTHR31384:SF94">
    <property type="entry name" value="AUXIN RESPONSE FACTOR 17"/>
    <property type="match status" value="1"/>
</dbReference>
<dbReference type="PANTHER" id="PTHR31384">
    <property type="entry name" value="AUXIN RESPONSE FACTOR 4-RELATED"/>
    <property type="match status" value="1"/>
</dbReference>
<dbReference type="Pfam" id="PF02362">
    <property type="entry name" value="B3"/>
    <property type="match status" value="1"/>
</dbReference>
<dbReference type="SMART" id="SM01019">
    <property type="entry name" value="B3"/>
    <property type="match status" value="1"/>
</dbReference>
<dbReference type="SUPFAM" id="SSF101936">
    <property type="entry name" value="DNA-binding pseudobarrel domain"/>
    <property type="match status" value="1"/>
</dbReference>
<dbReference type="PROSITE" id="PS50863">
    <property type="entry name" value="B3"/>
    <property type="match status" value="1"/>
</dbReference>
<organism>
    <name type="scientific">Oryza sativa subsp. japonica</name>
    <name type="common">Rice</name>
    <dbReference type="NCBI Taxonomy" id="39947"/>
    <lineage>
        <taxon>Eukaryota</taxon>
        <taxon>Viridiplantae</taxon>
        <taxon>Streptophyta</taxon>
        <taxon>Embryophyta</taxon>
        <taxon>Tracheophyta</taxon>
        <taxon>Spermatophyta</taxon>
        <taxon>Magnoliopsida</taxon>
        <taxon>Liliopsida</taxon>
        <taxon>Poales</taxon>
        <taxon>Poaceae</taxon>
        <taxon>BOP clade</taxon>
        <taxon>Oryzoideae</taxon>
        <taxon>Oryzeae</taxon>
        <taxon>Oryzinae</taxon>
        <taxon>Oryza</taxon>
        <taxon>Oryza sativa</taxon>
    </lineage>
</organism>
<comment type="subcellular location">
    <subcellularLocation>
        <location evidence="1">Nucleus</location>
    </subcellularLocation>
</comment>
<evidence type="ECO:0000255" key="1">
    <source>
        <dbReference type="PROSITE-ProRule" id="PRU00326"/>
    </source>
</evidence>
<evidence type="ECO:0000305" key="2"/>